<evidence type="ECO:0000250" key="1"/>
<evidence type="ECO:0000250" key="2">
    <source>
        <dbReference type="UniProtKB" id="P00157"/>
    </source>
</evidence>
<evidence type="ECO:0000255" key="3">
    <source>
        <dbReference type="PROSITE-ProRule" id="PRU00967"/>
    </source>
</evidence>
<evidence type="ECO:0000255" key="4">
    <source>
        <dbReference type="PROSITE-ProRule" id="PRU00968"/>
    </source>
</evidence>
<gene>
    <name type="primary">MT-CYB</name>
    <name type="synonym">COB</name>
    <name type="synonym">CYTB</name>
    <name type="synonym">MTCYB</name>
</gene>
<reference key="1">
    <citation type="submission" date="2004-04" db="EMBL/GenBank/DDBJ databases">
        <title>Molecular phylogenetics and diversification of South American grass mice, genus Akodon.</title>
        <authorList>
            <person name="Smith M.F."/>
            <person name="Patton J.L."/>
        </authorList>
    </citation>
    <scope>NUCLEOTIDE SEQUENCE [GENOMIC DNA]</scope>
</reference>
<accession>Q5QFW4</accession>
<proteinExistence type="inferred from homology"/>
<keyword id="KW-0249">Electron transport</keyword>
<keyword id="KW-0349">Heme</keyword>
<keyword id="KW-0408">Iron</keyword>
<keyword id="KW-0472">Membrane</keyword>
<keyword id="KW-0479">Metal-binding</keyword>
<keyword id="KW-0496">Mitochondrion</keyword>
<keyword id="KW-0999">Mitochondrion inner membrane</keyword>
<keyword id="KW-0679">Respiratory chain</keyword>
<keyword id="KW-0812">Transmembrane</keyword>
<keyword id="KW-1133">Transmembrane helix</keyword>
<keyword id="KW-0813">Transport</keyword>
<keyword id="KW-0830">Ubiquinone</keyword>
<sequence>MKILRKNHPLLKIINHSFIDLPTPSNISSWWNFGSLLGMCLMIQILTGLFLAMHYTSDTTTAFSSVAHICRDVNYGWLIRYLHANGASMFFICLFIHVGRGIYYGSYALSETWNIGIILFLMTMATAFVGYVLPWGQMSFWGATVITNLLSAIPYIGSTLVEWIWGGFSVDKATLTRFFAFHFILPFIIAAFALVHLLFLHETGSNNPSGLNSDSDKIPFHPYYTTKDLLGIFLLLLVLMILALFFPDVLGDPDNFTPANPLNTPAHIKPEWYFLFAYAILRSIPNKLGGVLALVLSILILAAFPLLNTSKQHGLIFRPVTQVIYWIFIANLLVLTWIGGQPVEYPFTMIGQIASITYFAIITILMPISNTIENNIIKL</sequence>
<geneLocation type="mitochondrion"/>
<organism>
    <name type="scientific">Akodon fumeus</name>
    <name type="common">Smoky grass mouse</name>
    <dbReference type="NCBI Taxonomy" id="291115"/>
    <lineage>
        <taxon>Eukaryota</taxon>
        <taxon>Metazoa</taxon>
        <taxon>Chordata</taxon>
        <taxon>Craniata</taxon>
        <taxon>Vertebrata</taxon>
        <taxon>Euteleostomi</taxon>
        <taxon>Mammalia</taxon>
        <taxon>Eutheria</taxon>
        <taxon>Euarchontoglires</taxon>
        <taxon>Glires</taxon>
        <taxon>Rodentia</taxon>
        <taxon>Myomorpha</taxon>
        <taxon>Muroidea</taxon>
        <taxon>Cricetidae</taxon>
        <taxon>Sigmodontinae</taxon>
        <taxon>Akodon</taxon>
    </lineage>
</organism>
<name>CYB_AKOFU</name>
<feature type="chain" id="PRO_0000060545" description="Cytochrome b">
    <location>
        <begin position="1"/>
        <end position="379"/>
    </location>
</feature>
<feature type="transmembrane region" description="Helical" evidence="2">
    <location>
        <begin position="33"/>
        <end position="53"/>
    </location>
</feature>
<feature type="transmembrane region" description="Helical" evidence="2">
    <location>
        <begin position="77"/>
        <end position="98"/>
    </location>
</feature>
<feature type="transmembrane region" description="Helical" evidence="2">
    <location>
        <begin position="113"/>
        <end position="133"/>
    </location>
</feature>
<feature type="transmembrane region" description="Helical" evidence="2">
    <location>
        <begin position="178"/>
        <end position="198"/>
    </location>
</feature>
<feature type="transmembrane region" description="Helical" evidence="2">
    <location>
        <begin position="226"/>
        <end position="246"/>
    </location>
</feature>
<feature type="transmembrane region" description="Helical" evidence="2">
    <location>
        <begin position="288"/>
        <end position="308"/>
    </location>
</feature>
<feature type="transmembrane region" description="Helical" evidence="2">
    <location>
        <begin position="320"/>
        <end position="340"/>
    </location>
</feature>
<feature type="transmembrane region" description="Helical" evidence="2">
    <location>
        <begin position="347"/>
        <end position="367"/>
    </location>
</feature>
<feature type="binding site" description="axial binding residue" evidence="2">
    <location>
        <position position="83"/>
    </location>
    <ligand>
        <name>heme b</name>
        <dbReference type="ChEBI" id="CHEBI:60344"/>
        <label>b562</label>
    </ligand>
    <ligandPart>
        <name>Fe</name>
        <dbReference type="ChEBI" id="CHEBI:18248"/>
    </ligandPart>
</feature>
<feature type="binding site" description="axial binding residue" evidence="2">
    <location>
        <position position="97"/>
    </location>
    <ligand>
        <name>heme b</name>
        <dbReference type="ChEBI" id="CHEBI:60344"/>
        <label>b566</label>
    </ligand>
    <ligandPart>
        <name>Fe</name>
        <dbReference type="ChEBI" id="CHEBI:18248"/>
    </ligandPart>
</feature>
<feature type="binding site" description="axial binding residue" evidence="2">
    <location>
        <position position="182"/>
    </location>
    <ligand>
        <name>heme b</name>
        <dbReference type="ChEBI" id="CHEBI:60344"/>
        <label>b562</label>
    </ligand>
    <ligandPart>
        <name>Fe</name>
        <dbReference type="ChEBI" id="CHEBI:18248"/>
    </ligandPart>
</feature>
<feature type="binding site" description="axial binding residue" evidence="2">
    <location>
        <position position="196"/>
    </location>
    <ligand>
        <name>heme b</name>
        <dbReference type="ChEBI" id="CHEBI:60344"/>
        <label>b566</label>
    </ligand>
    <ligandPart>
        <name>Fe</name>
        <dbReference type="ChEBI" id="CHEBI:18248"/>
    </ligandPart>
</feature>
<feature type="binding site" evidence="2">
    <location>
        <position position="201"/>
    </location>
    <ligand>
        <name>a ubiquinone</name>
        <dbReference type="ChEBI" id="CHEBI:16389"/>
    </ligand>
</feature>
<dbReference type="EMBL" id="AY605061">
    <property type="protein sequence ID" value="AAU05737.1"/>
    <property type="molecule type" value="Genomic_DNA"/>
</dbReference>
<dbReference type="SMR" id="Q5QFW4"/>
<dbReference type="GO" id="GO:0005743">
    <property type="term" value="C:mitochondrial inner membrane"/>
    <property type="evidence" value="ECO:0007669"/>
    <property type="project" value="UniProtKB-SubCell"/>
</dbReference>
<dbReference type="GO" id="GO:0045275">
    <property type="term" value="C:respiratory chain complex III"/>
    <property type="evidence" value="ECO:0007669"/>
    <property type="project" value="InterPro"/>
</dbReference>
<dbReference type="GO" id="GO:0046872">
    <property type="term" value="F:metal ion binding"/>
    <property type="evidence" value="ECO:0007669"/>
    <property type="project" value="UniProtKB-KW"/>
</dbReference>
<dbReference type="GO" id="GO:0008121">
    <property type="term" value="F:ubiquinol-cytochrome-c reductase activity"/>
    <property type="evidence" value="ECO:0007669"/>
    <property type="project" value="InterPro"/>
</dbReference>
<dbReference type="GO" id="GO:0006122">
    <property type="term" value="P:mitochondrial electron transport, ubiquinol to cytochrome c"/>
    <property type="evidence" value="ECO:0007669"/>
    <property type="project" value="TreeGrafter"/>
</dbReference>
<dbReference type="CDD" id="cd00290">
    <property type="entry name" value="cytochrome_b_C"/>
    <property type="match status" value="1"/>
</dbReference>
<dbReference type="CDD" id="cd00284">
    <property type="entry name" value="Cytochrome_b_N"/>
    <property type="match status" value="1"/>
</dbReference>
<dbReference type="FunFam" id="1.20.810.10:FF:000002">
    <property type="entry name" value="Cytochrome b"/>
    <property type="match status" value="1"/>
</dbReference>
<dbReference type="Gene3D" id="1.20.810.10">
    <property type="entry name" value="Cytochrome Bc1 Complex, Chain C"/>
    <property type="match status" value="1"/>
</dbReference>
<dbReference type="InterPro" id="IPR005798">
    <property type="entry name" value="Cyt_b/b6_C"/>
</dbReference>
<dbReference type="InterPro" id="IPR036150">
    <property type="entry name" value="Cyt_b/b6_C_sf"/>
</dbReference>
<dbReference type="InterPro" id="IPR005797">
    <property type="entry name" value="Cyt_b/b6_N"/>
</dbReference>
<dbReference type="InterPro" id="IPR027387">
    <property type="entry name" value="Cytb/b6-like_sf"/>
</dbReference>
<dbReference type="InterPro" id="IPR030689">
    <property type="entry name" value="Cytochrome_b"/>
</dbReference>
<dbReference type="InterPro" id="IPR048260">
    <property type="entry name" value="Cytochrome_b_C_euk/bac"/>
</dbReference>
<dbReference type="InterPro" id="IPR048259">
    <property type="entry name" value="Cytochrome_b_N_euk/bac"/>
</dbReference>
<dbReference type="InterPro" id="IPR016174">
    <property type="entry name" value="Di-haem_cyt_TM"/>
</dbReference>
<dbReference type="PANTHER" id="PTHR19271">
    <property type="entry name" value="CYTOCHROME B"/>
    <property type="match status" value="1"/>
</dbReference>
<dbReference type="PANTHER" id="PTHR19271:SF16">
    <property type="entry name" value="CYTOCHROME B"/>
    <property type="match status" value="1"/>
</dbReference>
<dbReference type="Pfam" id="PF00032">
    <property type="entry name" value="Cytochrom_B_C"/>
    <property type="match status" value="1"/>
</dbReference>
<dbReference type="Pfam" id="PF00033">
    <property type="entry name" value="Cytochrome_B"/>
    <property type="match status" value="1"/>
</dbReference>
<dbReference type="PIRSF" id="PIRSF038885">
    <property type="entry name" value="COB"/>
    <property type="match status" value="1"/>
</dbReference>
<dbReference type="SUPFAM" id="SSF81648">
    <property type="entry name" value="a domain/subunit of cytochrome bc1 complex (Ubiquinol-cytochrome c reductase)"/>
    <property type="match status" value="1"/>
</dbReference>
<dbReference type="SUPFAM" id="SSF81342">
    <property type="entry name" value="Transmembrane di-heme cytochromes"/>
    <property type="match status" value="1"/>
</dbReference>
<dbReference type="PROSITE" id="PS51003">
    <property type="entry name" value="CYTB_CTER"/>
    <property type="match status" value="1"/>
</dbReference>
<dbReference type="PROSITE" id="PS51002">
    <property type="entry name" value="CYTB_NTER"/>
    <property type="match status" value="1"/>
</dbReference>
<comment type="function">
    <text evidence="2">Component of the ubiquinol-cytochrome c reductase complex (complex III or cytochrome b-c1 complex) that is part of the mitochondrial respiratory chain. The b-c1 complex mediates electron transfer from ubiquinol to cytochrome c. Contributes to the generation of a proton gradient across the mitochondrial membrane that is then used for ATP synthesis.</text>
</comment>
<comment type="cofactor">
    <cofactor evidence="2">
        <name>heme b</name>
        <dbReference type="ChEBI" id="CHEBI:60344"/>
    </cofactor>
    <text evidence="2">Binds 2 heme b groups non-covalently.</text>
</comment>
<comment type="subunit">
    <text evidence="2">The cytochrome bc1 complex contains 11 subunits: 3 respiratory subunits (MT-CYB, CYC1 and UQCRFS1), 2 core proteins (UQCRC1 and UQCRC2) and 6 low-molecular weight proteins (UQCRH/QCR6, UQCRB/QCR7, UQCRQ/QCR8, UQCR10/QCR9, UQCR11/QCR10 and a cleavage product of UQCRFS1). This cytochrome bc1 complex then forms a dimer.</text>
</comment>
<comment type="subcellular location">
    <subcellularLocation>
        <location evidence="2">Mitochondrion inner membrane</location>
        <topology evidence="2">Multi-pass membrane protein</topology>
    </subcellularLocation>
</comment>
<comment type="miscellaneous">
    <text evidence="1">Heme 1 (or BL or b562) is low-potential and absorbs at about 562 nm, and heme 2 (or BH or b566) is high-potential and absorbs at about 566 nm.</text>
</comment>
<comment type="similarity">
    <text evidence="3 4">Belongs to the cytochrome b family.</text>
</comment>
<comment type="caution">
    <text evidence="2">The full-length protein contains only eight transmembrane helices, not nine as predicted by bioinformatics tools.</text>
</comment>
<protein>
    <recommendedName>
        <fullName>Cytochrome b</fullName>
    </recommendedName>
    <alternativeName>
        <fullName>Complex III subunit 3</fullName>
    </alternativeName>
    <alternativeName>
        <fullName>Complex III subunit III</fullName>
    </alternativeName>
    <alternativeName>
        <fullName>Cytochrome b-c1 complex subunit 3</fullName>
    </alternativeName>
    <alternativeName>
        <fullName>Ubiquinol-cytochrome-c reductase complex cytochrome b subunit</fullName>
    </alternativeName>
</protein>